<feature type="chain" id="PRO_1000061511" description="Putative pre-16S rRNA nuclease">
    <location>
        <begin position="1"/>
        <end position="138"/>
    </location>
</feature>
<comment type="function">
    <text evidence="1">Could be a nuclease involved in processing of the 5'-end of pre-16S rRNA.</text>
</comment>
<comment type="subcellular location">
    <subcellularLocation>
        <location evidence="1">Cytoplasm</location>
    </subcellularLocation>
</comment>
<comment type="similarity">
    <text evidence="1">Belongs to the YqgF nuclease family.</text>
</comment>
<gene>
    <name evidence="1" type="primary">yqgF</name>
    <name type="ordered locus">EcHS_A3107</name>
</gene>
<organism>
    <name type="scientific">Escherichia coli O9:H4 (strain HS)</name>
    <dbReference type="NCBI Taxonomy" id="331112"/>
    <lineage>
        <taxon>Bacteria</taxon>
        <taxon>Pseudomonadati</taxon>
        <taxon>Pseudomonadota</taxon>
        <taxon>Gammaproteobacteria</taxon>
        <taxon>Enterobacterales</taxon>
        <taxon>Enterobacteriaceae</taxon>
        <taxon>Escherichia</taxon>
    </lineage>
</organism>
<dbReference type="EC" id="3.1.-.-" evidence="1"/>
<dbReference type="EMBL" id="CP000802">
    <property type="protein sequence ID" value="ABV07343.1"/>
    <property type="molecule type" value="Genomic_DNA"/>
</dbReference>
<dbReference type="BMRB" id="A8A489"/>
<dbReference type="SMR" id="A8A489"/>
<dbReference type="KEGG" id="ecx:EcHS_A3107"/>
<dbReference type="HOGENOM" id="CLU_098240_3_0_6"/>
<dbReference type="GO" id="GO:0005829">
    <property type="term" value="C:cytosol"/>
    <property type="evidence" value="ECO:0007669"/>
    <property type="project" value="TreeGrafter"/>
</dbReference>
<dbReference type="GO" id="GO:0004518">
    <property type="term" value="F:nuclease activity"/>
    <property type="evidence" value="ECO:0007669"/>
    <property type="project" value="UniProtKB-KW"/>
</dbReference>
<dbReference type="GO" id="GO:0000967">
    <property type="term" value="P:rRNA 5'-end processing"/>
    <property type="evidence" value="ECO:0007669"/>
    <property type="project" value="UniProtKB-UniRule"/>
</dbReference>
<dbReference type="CDD" id="cd16964">
    <property type="entry name" value="YqgF"/>
    <property type="match status" value="1"/>
</dbReference>
<dbReference type="FunFam" id="3.30.420.140:FF:000002">
    <property type="entry name" value="Putative pre-16S rRNA nuclease"/>
    <property type="match status" value="1"/>
</dbReference>
<dbReference type="Gene3D" id="3.30.420.140">
    <property type="entry name" value="YqgF/RNase H-like domain"/>
    <property type="match status" value="1"/>
</dbReference>
<dbReference type="HAMAP" id="MF_00651">
    <property type="entry name" value="Nuclease_YqgF"/>
    <property type="match status" value="1"/>
</dbReference>
<dbReference type="InterPro" id="IPR012337">
    <property type="entry name" value="RNaseH-like_sf"/>
</dbReference>
<dbReference type="InterPro" id="IPR005227">
    <property type="entry name" value="YqgF"/>
</dbReference>
<dbReference type="InterPro" id="IPR006641">
    <property type="entry name" value="YqgF/RNaseH-like_dom"/>
</dbReference>
<dbReference type="InterPro" id="IPR037027">
    <property type="entry name" value="YqgF/RNaseH-like_dom_sf"/>
</dbReference>
<dbReference type="NCBIfam" id="TIGR00250">
    <property type="entry name" value="RNAse_H_YqgF"/>
    <property type="match status" value="1"/>
</dbReference>
<dbReference type="PANTHER" id="PTHR33317">
    <property type="entry name" value="POLYNUCLEOTIDYL TRANSFERASE, RIBONUCLEASE H-LIKE SUPERFAMILY PROTEIN"/>
    <property type="match status" value="1"/>
</dbReference>
<dbReference type="PANTHER" id="PTHR33317:SF4">
    <property type="entry name" value="POLYNUCLEOTIDYL TRANSFERASE, RIBONUCLEASE H-LIKE SUPERFAMILY PROTEIN"/>
    <property type="match status" value="1"/>
</dbReference>
<dbReference type="Pfam" id="PF03652">
    <property type="entry name" value="RuvX"/>
    <property type="match status" value="1"/>
</dbReference>
<dbReference type="SMART" id="SM00732">
    <property type="entry name" value="YqgFc"/>
    <property type="match status" value="1"/>
</dbReference>
<dbReference type="SUPFAM" id="SSF53098">
    <property type="entry name" value="Ribonuclease H-like"/>
    <property type="match status" value="1"/>
</dbReference>
<name>YQGF_ECOHS</name>
<keyword id="KW-0963">Cytoplasm</keyword>
<keyword id="KW-0378">Hydrolase</keyword>
<keyword id="KW-0540">Nuclease</keyword>
<keyword id="KW-0690">Ribosome biogenesis</keyword>
<proteinExistence type="inferred from homology"/>
<protein>
    <recommendedName>
        <fullName evidence="1">Putative pre-16S rRNA nuclease</fullName>
        <ecNumber evidence="1">3.1.-.-</ecNumber>
    </recommendedName>
</protein>
<sequence>MSGTLLAFDFGTKSIGVAVGQRITGTARPLPAIKAQDGTPDWNIIERLLKEWQPDEIIVGLPLNMDGTEQPLTARARKFANRIHGRFGVEVKLHDERLSTVEARSGLFEQGGYRALNKGKVDSASAVIILESYFEQGY</sequence>
<accession>A8A489</accession>
<reference key="1">
    <citation type="journal article" date="2008" name="J. Bacteriol.">
        <title>The pangenome structure of Escherichia coli: comparative genomic analysis of E. coli commensal and pathogenic isolates.</title>
        <authorList>
            <person name="Rasko D.A."/>
            <person name="Rosovitz M.J."/>
            <person name="Myers G.S.A."/>
            <person name="Mongodin E.F."/>
            <person name="Fricke W.F."/>
            <person name="Gajer P."/>
            <person name="Crabtree J."/>
            <person name="Sebaihia M."/>
            <person name="Thomson N.R."/>
            <person name="Chaudhuri R."/>
            <person name="Henderson I.R."/>
            <person name="Sperandio V."/>
            <person name="Ravel J."/>
        </authorList>
    </citation>
    <scope>NUCLEOTIDE SEQUENCE [LARGE SCALE GENOMIC DNA]</scope>
    <source>
        <strain>HS</strain>
    </source>
</reference>
<evidence type="ECO:0000255" key="1">
    <source>
        <dbReference type="HAMAP-Rule" id="MF_00651"/>
    </source>
</evidence>